<protein>
    <recommendedName>
        <fullName>Deoxyuridine 5'-triphosphate nucleotidohydrolase</fullName>
        <shortName>dUTPase</shortName>
        <ecNumber>3.6.1.23</ecNumber>
    </recommendedName>
    <alternativeName>
        <fullName>dUTP pyrophosphatase</fullName>
    </alternativeName>
</protein>
<gene>
    <name type="primary">OPG046</name>
    <name type="synonym">C6L</name>
    <name type="synonym">DUT</name>
    <name type="synonym">E2L</name>
    <name type="synonym">F2L</name>
</gene>
<comment type="function">
    <text evidence="2">This enzyme is involved in nucleotide metabolism: it produces dUMP, the immediate precursor of thymidine nucleotides and it decreases the intracellular concentration of dUTP so that uracil cannot be incorporated into DNA.</text>
</comment>
<comment type="catalytic activity">
    <reaction evidence="2">
        <text>dUTP + H2O = dUMP + diphosphate + H(+)</text>
        <dbReference type="Rhea" id="RHEA:10248"/>
        <dbReference type="ChEBI" id="CHEBI:15377"/>
        <dbReference type="ChEBI" id="CHEBI:15378"/>
        <dbReference type="ChEBI" id="CHEBI:33019"/>
        <dbReference type="ChEBI" id="CHEBI:61555"/>
        <dbReference type="ChEBI" id="CHEBI:246422"/>
        <dbReference type="EC" id="3.6.1.23"/>
    </reaction>
    <physiologicalReaction direction="left-to-right" evidence="2">
        <dbReference type="Rhea" id="RHEA:10249"/>
    </physiologicalReaction>
</comment>
<comment type="cofactor">
    <cofactor evidence="1">
        <name>Mg(2+)</name>
        <dbReference type="ChEBI" id="CHEBI:18420"/>
    </cofactor>
</comment>
<comment type="induction">
    <text evidence="2">Expressed in the early phase of the viral replicative cycle.</text>
</comment>
<comment type="similarity">
    <text evidence="3">Belongs to the dUTPase family.</text>
</comment>
<feature type="chain" id="PRO_0000448104" description="Deoxyuridine 5'-triphosphate nucleotidohydrolase">
    <location>
        <begin position="1"/>
        <end position="147"/>
    </location>
</feature>
<feature type="binding site" evidence="2">
    <location>
        <position position="24"/>
    </location>
    <ligand>
        <name>Mg(2+)</name>
        <dbReference type="ChEBI" id="CHEBI:18420"/>
    </ligand>
</feature>
<feature type="binding site" evidence="2">
    <location>
        <begin position="68"/>
        <end position="70"/>
    </location>
    <ligand>
        <name>dUTP</name>
        <dbReference type="ChEBI" id="CHEBI:61555"/>
    </ligand>
</feature>
<feature type="binding site" evidence="2">
    <location>
        <begin position="82"/>
        <end position="85"/>
    </location>
    <ligand>
        <name>dUTP</name>
        <dbReference type="ChEBI" id="CHEBI:61555"/>
    </ligand>
</feature>
<feature type="binding site" evidence="2">
    <location>
        <position position="88"/>
    </location>
    <ligand>
        <name>dUTP</name>
        <dbReference type="ChEBI" id="CHEBI:61555"/>
    </ligand>
</feature>
<feature type="binding site" evidence="2">
    <location>
        <position position="93"/>
    </location>
    <ligand>
        <name>dUTP</name>
        <dbReference type="ChEBI" id="CHEBI:61555"/>
    </ligand>
</feature>
<feature type="binding site" evidence="2">
    <location>
        <position position="95"/>
    </location>
    <ligand>
        <name>dUTP</name>
        <dbReference type="ChEBI" id="CHEBI:61555"/>
    </ligand>
</feature>
<feature type="binding site" evidence="2">
    <location>
        <position position="111"/>
    </location>
    <ligand>
        <name>dUTP</name>
        <dbReference type="ChEBI" id="CHEBI:61555"/>
    </ligand>
</feature>
<dbReference type="EC" id="3.6.1.23"/>
<dbReference type="EMBL" id="L22579">
    <property type="protein sequence ID" value="AAA60774.1"/>
    <property type="molecule type" value="Genomic_DNA"/>
</dbReference>
<dbReference type="EMBL" id="U18340">
    <property type="protein sequence ID" value="AAA69437.1"/>
    <property type="molecule type" value="Genomic_DNA"/>
</dbReference>
<dbReference type="EMBL" id="U18337">
    <property type="protein sequence ID" value="AAA69331.1"/>
    <property type="molecule type" value="Genomic_DNA"/>
</dbReference>
<dbReference type="EMBL" id="U18338">
    <property type="protein sequence ID" value="AAA69372.1"/>
    <property type="molecule type" value="Genomic_DNA"/>
</dbReference>
<dbReference type="EMBL" id="Y16780">
    <property type="protein sequence ID" value="CAB54626.1"/>
    <property type="molecule type" value="Genomic_DNA"/>
</dbReference>
<dbReference type="PIR" id="H72153">
    <property type="entry name" value="H72153"/>
</dbReference>
<dbReference type="PIR" id="T28464">
    <property type="entry name" value="T28464"/>
</dbReference>
<dbReference type="RefSeq" id="NP_042070.1">
    <property type="nucleotide sequence ID" value="NC_001611.1"/>
</dbReference>
<dbReference type="SMR" id="P0DSZ8"/>
<dbReference type="GeneID" id="1486386"/>
<dbReference type="KEGG" id="vg:1486386"/>
<dbReference type="Proteomes" id="UP000111493">
    <property type="component" value="Segment"/>
</dbReference>
<dbReference type="Proteomes" id="UP000119805">
    <property type="component" value="Segment"/>
</dbReference>
<dbReference type="GO" id="GO:0004170">
    <property type="term" value="F:dUTP diphosphatase activity"/>
    <property type="evidence" value="ECO:0007669"/>
    <property type="project" value="UniProtKB-EC"/>
</dbReference>
<dbReference type="GO" id="GO:0000287">
    <property type="term" value="F:magnesium ion binding"/>
    <property type="evidence" value="ECO:0007669"/>
    <property type="project" value="InterPro"/>
</dbReference>
<dbReference type="GO" id="GO:0006226">
    <property type="term" value="P:dUMP biosynthetic process"/>
    <property type="evidence" value="ECO:0007669"/>
    <property type="project" value="InterPro"/>
</dbReference>
<dbReference type="GO" id="GO:0046081">
    <property type="term" value="P:dUTP catabolic process"/>
    <property type="evidence" value="ECO:0007669"/>
    <property type="project" value="InterPro"/>
</dbReference>
<dbReference type="CDD" id="cd07557">
    <property type="entry name" value="trimeric_dUTPase"/>
    <property type="match status" value="1"/>
</dbReference>
<dbReference type="Gene3D" id="2.70.40.10">
    <property type="match status" value="1"/>
</dbReference>
<dbReference type="InterPro" id="IPR008181">
    <property type="entry name" value="dUTPase"/>
</dbReference>
<dbReference type="InterPro" id="IPR029054">
    <property type="entry name" value="dUTPase-like"/>
</dbReference>
<dbReference type="InterPro" id="IPR036157">
    <property type="entry name" value="dUTPase-like_sf"/>
</dbReference>
<dbReference type="InterPro" id="IPR033704">
    <property type="entry name" value="dUTPase_trimeric"/>
</dbReference>
<dbReference type="NCBIfam" id="TIGR00576">
    <property type="entry name" value="dut"/>
    <property type="match status" value="1"/>
</dbReference>
<dbReference type="NCBIfam" id="NF001862">
    <property type="entry name" value="PRK00601.1"/>
    <property type="match status" value="1"/>
</dbReference>
<dbReference type="PANTHER" id="PTHR11241">
    <property type="entry name" value="DEOXYURIDINE 5'-TRIPHOSPHATE NUCLEOTIDOHYDROLASE"/>
    <property type="match status" value="1"/>
</dbReference>
<dbReference type="PANTHER" id="PTHR11241:SF0">
    <property type="entry name" value="DEOXYURIDINE 5'-TRIPHOSPHATE NUCLEOTIDOHYDROLASE"/>
    <property type="match status" value="1"/>
</dbReference>
<dbReference type="Pfam" id="PF00692">
    <property type="entry name" value="dUTPase"/>
    <property type="match status" value="1"/>
</dbReference>
<dbReference type="SUPFAM" id="SSF51283">
    <property type="entry name" value="dUTPase-like"/>
    <property type="match status" value="1"/>
</dbReference>
<accession>P0DSZ8</accession>
<accession>P33826</accession>
<accession>Q76Q48</accession>
<organismHost>
    <name type="scientific">Homo sapiens</name>
    <name type="common">Human</name>
    <dbReference type="NCBI Taxonomy" id="9606"/>
</organismHost>
<proteinExistence type="inferred from homology"/>
<sequence>MFNMNINSPVRFVKETNRAKSPTRQSPYAAGYDLYSAYDYTIPPGERQLIKTDISMSMPKFCYGRIAPRSGLSLKGIDIGGGVIDEDYRGNIGVILINNGKYTFNVNTGDRIAQLIYQRIYYPELKEVQSLDSTDRGDQGFGSTGLR</sequence>
<name>DUT_VARV</name>
<organism>
    <name type="scientific">Variola virus</name>
    <dbReference type="NCBI Taxonomy" id="10255"/>
    <lineage>
        <taxon>Viruses</taxon>
        <taxon>Varidnaviria</taxon>
        <taxon>Bamfordvirae</taxon>
        <taxon>Nucleocytoviricota</taxon>
        <taxon>Pokkesviricetes</taxon>
        <taxon>Chitovirales</taxon>
        <taxon>Poxviridae</taxon>
        <taxon>Chordopoxvirinae</taxon>
        <taxon>Orthopoxvirus</taxon>
    </lineage>
</organism>
<keyword id="KW-0244">Early protein</keyword>
<keyword id="KW-0378">Hydrolase</keyword>
<keyword id="KW-0460">Magnesium</keyword>
<keyword id="KW-0479">Metal-binding</keyword>
<keyword id="KW-0546">Nucleotide metabolism</keyword>
<reference key="1">
    <citation type="journal article" date="1993" name="Nature">
        <title>Potential virulence determinants in terminal regions of variola smallpox virus genome.</title>
        <authorList>
            <person name="Massung R.F."/>
            <person name="Esposito J.J."/>
            <person name="Liu L.I."/>
            <person name="Qi J."/>
            <person name="Utterback T.R."/>
            <person name="Knight J.C."/>
            <person name="Aubin L."/>
            <person name="Yuran T.E."/>
            <person name="Parsons J.M."/>
            <person name="Loparev V.N."/>
            <person name="Selivanov N.A."/>
            <person name="Cavallaro K.F."/>
            <person name="Kerlavage A.R."/>
            <person name="Mahy B.W.J."/>
            <person name="Venter J.C."/>
        </authorList>
    </citation>
    <scope>NUCLEOTIDE SEQUENCE [GENOMIC DNA]</scope>
    <source>
        <strain>Bangladesh-1975</strain>
    </source>
</reference>
<reference key="2">
    <citation type="submission" date="1994-12" db="EMBL/GenBank/DDBJ databases">
        <authorList>
            <person name="Massung R.F."/>
            <person name="Loparev V.N."/>
            <person name="Knight J.C."/>
            <person name="Chizhikov V.E."/>
            <person name="Parsons J.M."/>
            <person name="Totmenin A.V."/>
            <person name="Shchelkunov S.N."/>
            <person name="Esposito J.J."/>
        </authorList>
    </citation>
    <scope>NUCLEOTIDE SEQUENCE [GENOMIC DNA]</scope>
    <source>
        <strain>Congo-1965</strain>
        <strain>Garcia-1966</strain>
        <strain>Somalia-1977</strain>
    </source>
</reference>
<reference key="3">
    <citation type="journal article" date="2000" name="Virology">
        <title>Alastrim smallpox variola minor virus genome DNA sequences.</title>
        <authorList>
            <person name="Shchelkunov S.N."/>
            <person name="Totmenin A.V."/>
            <person name="Loparev V.N."/>
            <person name="Safronov P.F."/>
            <person name="Gutorov V.V."/>
            <person name="Chizhikov V.E."/>
            <person name="Knight J.C."/>
            <person name="Parsons J.M."/>
            <person name="Massung R.F."/>
            <person name="Esposito J.J."/>
        </authorList>
    </citation>
    <scope>NUCLEOTIDE SEQUENCE [LARGE SCALE GENOMIC DNA]</scope>
    <source>
        <strain>Garcia-1966</strain>
    </source>
</reference>
<evidence type="ECO:0000250" key="1"/>
<evidence type="ECO:0000250" key="2">
    <source>
        <dbReference type="UniProtKB" id="P17374"/>
    </source>
</evidence>
<evidence type="ECO:0000305" key="3"/>